<name>PSAM_ANTAG</name>
<gene>
    <name evidence="1" type="primary">psaM</name>
</gene>
<keyword id="KW-0150">Chloroplast</keyword>
<keyword id="KW-0472">Membrane</keyword>
<keyword id="KW-0602">Photosynthesis</keyword>
<keyword id="KW-0603">Photosystem I</keyword>
<keyword id="KW-0934">Plastid</keyword>
<keyword id="KW-0793">Thylakoid</keyword>
<keyword id="KW-0812">Transmembrane</keyword>
<keyword id="KW-1133">Transmembrane helix</keyword>
<organism>
    <name type="scientific">Anthoceros angustus</name>
    <name type="common">Hornwort</name>
    <name type="synonym">Anthoceros formosae</name>
    <dbReference type="NCBI Taxonomy" id="48387"/>
    <lineage>
        <taxon>Eukaryota</taxon>
        <taxon>Viridiplantae</taxon>
        <taxon>Streptophyta</taxon>
        <taxon>Embryophyta</taxon>
        <taxon>Anthocerotophyta</taxon>
        <taxon>Anthocerotopsida</taxon>
        <taxon>Anthocerotidae</taxon>
        <taxon>Anthocerotales</taxon>
        <taxon>Anthocerotaceae</taxon>
        <taxon>Anthoceros</taxon>
    </lineage>
</organism>
<comment type="subcellular location">
    <subcellularLocation>
        <location evidence="1">Plastid</location>
        <location evidence="1">Chloroplast thylakoid membrane</location>
        <topology evidence="1">Single-pass membrane protein</topology>
    </subcellularLocation>
</comment>
<comment type="similarity">
    <text evidence="1">Belongs to the PsaM family.</text>
</comment>
<proteinExistence type="evidence at transcript level"/>
<evidence type="ECO:0000255" key="1">
    <source>
        <dbReference type="HAMAP-Rule" id="MF_00828"/>
    </source>
</evidence>
<feature type="chain" id="PRO_0000207758" description="Photosystem I reaction center subunit XII">
    <location>
        <begin position="1"/>
        <end position="32"/>
    </location>
</feature>
<feature type="transmembrane region" description="Helical" evidence="1">
    <location>
        <begin position="3"/>
        <end position="23"/>
    </location>
</feature>
<reference key="1">
    <citation type="journal article" date="2003" name="Nucleic Acids Res.">
        <title>The complete nucleotide sequence of the hornwort (Anthoceros formosae) chloroplast genome: insight into the earliest land plants.</title>
        <authorList>
            <person name="Kugita M."/>
            <person name="Kaneko A."/>
            <person name="Yamamoto Y."/>
            <person name="Takeya Y."/>
            <person name="Matsumoto T."/>
            <person name="Yoshinaga K."/>
        </authorList>
    </citation>
    <scope>NUCLEOTIDE SEQUENCE [LARGE SCALE GENOMIC DNA]</scope>
</reference>
<reference key="2">
    <citation type="journal article" date="2003" name="Nucleic Acids Res.">
        <title>RNA editing in hornwort chloroplasts makes more than half the genes functional.</title>
        <authorList>
            <person name="Kugita M."/>
            <person name="Yamamoto Y."/>
            <person name="Fujikawa T."/>
            <person name="Matsumoto T."/>
            <person name="Yoshinaga K."/>
        </authorList>
    </citation>
    <scope>NUCLEOTIDE SEQUENCE [MRNA]</scope>
    <scope>ABSENCE OF RNA EDITING</scope>
    <source>
        <tissue>Thallus</tissue>
    </source>
</reference>
<dbReference type="EMBL" id="AB086179">
    <property type="protein sequence ID" value="BAC55335.1"/>
    <property type="molecule type" value="Genomic_DNA"/>
</dbReference>
<dbReference type="EMBL" id="AB087427">
    <property type="protein sequence ID" value="BAC55426.1"/>
    <property type="molecule type" value="mRNA"/>
</dbReference>
<dbReference type="RefSeq" id="NP_777399.1">
    <property type="nucleotide sequence ID" value="NC_004543.1"/>
</dbReference>
<dbReference type="SMR" id="Q85AJ9"/>
<dbReference type="GeneID" id="2553395"/>
<dbReference type="GO" id="GO:0009535">
    <property type="term" value="C:chloroplast thylakoid membrane"/>
    <property type="evidence" value="ECO:0007669"/>
    <property type="project" value="UniProtKB-SubCell"/>
</dbReference>
<dbReference type="GO" id="GO:0009522">
    <property type="term" value="C:photosystem I"/>
    <property type="evidence" value="ECO:0007669"/>
    <property type="project" value="UniProtKB-KW"/>
</dbReference>
<dbReference type="GO" id="GO:0015979">
    <property type="term" value="P:photosynthesis"/>
    <property type="evidence" value="ECO:0007669"/>
    <property type="project" value="UniProtKB-UniRule"/>
</dbReference>
<dbReference type="HAMAP" id="MF_00828">
    <property type="entry name" value="PSI_PsaM"/>
    <property type="match status" value="1"/>
</dbReference>
<dbReference type="InterPro" id="IPR010010">
    <property type="entry name" value="PSI_PsaM"/>
</dbReference>
<dbReference type="InterPro" id="IPR037279">
    <property type="entry name" value="PSI_PsaM_sf"/>
</dbReference>
<dbReference type="NCBIfam" id="TIGR03053">
    <property type="entry name" value="PS_I_psaM"/>
    <property type="match status" value="1"/>
</dbReference>
<dbReference type="Pfam" id="PF07465">
    <property type="entry name" value="PsaM"/>
    <property type="match status" value="1"/>
</dbReference>
<dbReference type="SUPFAM" id="SSF81548">
    <property type="entry name" value="Subunit XII of photosystem I reaction centre, PsaM"/>
    <property type="match status" value="1"/>
</dbReference>
<accession>Q85AJ9</accession>
<protein>
    <recommendedName>
        <fullName evidence="1">Photosystem I reaction center subunit XII</fullName>
    </recommendedName>
    <alternativeName>
        <fullName evidence="1">PSI-M</fullName>
    </alternativeName>
</protein>
<sequence length="32" mass="3450">MTSISDGQIVVALISAFIIVILASRLGKELYQ</sequence>
<geneLocation type="chloroplast"/>